<reference key="1">
    <citation type="journal article" date="2005" name="Nature">
        <title>The map-based sequence of the rice genome.</title>
        <authorList>
            <consortium name="International rice genome sequencing project (IRGSP)"/>
        </authorList>
    </citation>
    <scope>NUCLEOTIDE SEQUENCE [LARGE SCALE GENOMIC DNA]</scope>
    <source>
        <strain>cv. Nipponbare</strain>
    </source>
</reference>
<reference key="2">
    <citation type="journal article" date="2008" name="Nucleic Acids Res.">
        <title>The rice annotation project database (RAP-DB): 2008 update.</title>
        <authorList>
            <consortium name="The rice annotation project (RAP)"/>
        </authorList>
    </citation>
    <scope>GENOME REANNOTATION</scope>
    <source>
        <strain>cv. Nipponbare</strain>
    </source>
</reference>
<reference key="3">
    <citation type="journal article" date="2013" name="Rice">
        <title>Improvement of the Oryza sativa Nipponbare reference genome using next generation sequence and optical map data.</title>
        <authorList>
            <person name="Kawahara Y."/>
            <person name="de la Bastide M."/>
            <person name="Hamilton J.P."/>
            <person name="Kanamori H."/>
            <person name="McCombie W.R."/>
            <person name="Ouyang S."/>
            <person name="Schwartz D.C."/>
            <person name="Tanaka T."/>
            <person name="Wu J."/>
            <person name="Zhou S."/>
            <person name="Childs K.L."/>
            <person name="Davidson R.M."/>
            <person name="Lin H."/>
            <person name="Quesada-Ocampo L."/>
            <person name="Vaillancourt B."/>
            <person name="Sakai H."/>
            <person name="Lee S.S."/>
            <person name="Kim J."/>
            <person name="Numa H."/>
            <person name="Itoh T."/>
            <person name="Buell C.R."/>
            <person name="Matsumoto T."/>
        </authorList>
    </citation>
    <scope>GENOME REANNOTATION</scope>
    <source>
        <strain>cv. Nipponbare</strain>
    </source>
</reference>
<reference key="4">
    <citation type="journal article" date="2005" name="PLoS Biol.">
        <title>The genomes of Oryza sativa: a history of duplications.</title>
        <authorList>
            <person name="Yu J."/>
            <person name="Wang J."/>
            <person name="Lin W."/>
            <person name="Li S."/>
            <person name="Li H."/>
            <person name="Zhou J."/>
            <person name="Ni P."/>
            <person name="Dong W."/>
            <person name="Hu S."/>
            <person name="Zeng C."/>
            <person name="Zhang J."/>
            <person name="Zhang Y."/>
            <person name="Li R."/>
            <person name="Xu Z."/>
            <person name="Li S."/>
            <person name="Li X."/>
            <person name="Zheng H."/>
            <person name="Cong L."/>
            <person name="Lin L."/>
            <person name="Yin J."/>
            <person name="Geng J."/>
            <person name="Li G."/>
            <person name="Shi J."/>
            <person name="Liu J."/>
            <person name="Lv H."/>
            <person name="Li J."/>
            <person name="Wang J."/>
            <person name="Deng Y."/>
            <person name="Ran L."/>
            <person name="Shi X."/>
            <person name="Wang X."/>
            <person name="Wu Q."/>
            <person name="Li C."/>
            <person name="Ren X."/>
            <person name="Wang J."/>
            <person name="Wang X."/>
            <person name="Li D."/>
            <person name="Liu D."/>
            <person name="Zhang X."/>
            <person name="Ji Z."/>
            <person name="Zhao W."/>
            <person name="Sun Y."/>
            <person name="Zhang Z."/>
            <person name="Bao J."/>
            <person name="Han Y."/>
            <person name="Dong L."/>
            <person name="Ji J."/>
            <person name="Chen P."/>
            <person name="Wu S."/>
            <person name="Liu J."/>
            <person name="Xiao Y."/>
            <person name="Bu D."/>
            <person name="Tan J."/>
            <person name="Yang L."/>
            <person name="Ye C."/>
            <person name="Zhang J."/>
            <person name="Xu J."/>
            <person name="Zhou Y."/>
            <person name="Yu Y."/>
            <person name="Zhang B."/>
            <person name="Zhuang S."/>
            <person name="Wei H."/>
            <person name="Liu B."/>
            <person name="Lei M."/>
            <person name="Yu H."/>
            <person name="Li Y."/>
            <person name="Xu H."/>
            <person name="Wei S."/>
            <person name="He X."/>
            <person name="Fang L."/>
            <person name="Zhang Z."/>
            <person name="Zhang Y."/>
            <person name="Huang X."/>
            <person name="Su Z."/>
            <person name="Tong W."/>
            <person name="Li J."/>
            <person name="Tong Z."/>
            <person name="Li S."/>
            <person name="Ye J."/>
            <person name="Wang L."/>
            <person name="Fang L."/>
            <person name="Lei T."/>
            <person name="Chen C.-S."/>
            <person name="Chen H.-C."/>
            <person name="Xu Z."/>
            <person name="Li H."/>
            <person name="Huang H."/>
            <person name="Zhang F."/>
            <person name="Xu H."/>
            <person name="Li N."/>
            <person name="Zhao C."/>
            <person name="Li S."/>
            <person name="Dong L."/>
            <person name="Huang Y."/>
            <person name="Li L."/>
            <person name="Xi Y."/>
            <person name="Qi Q."/>
            <person name="Li W."/>
            <person name="Zhang B."/>
            <person name="Hu W."/>
            <person name="Zhang Y."/>
            <person name="Tian X."/>
            <person name="Jiao Y."/>
            <person name="Liang X."/>
            <person name="Jin J."/>
            <person name="Gao L."/>
            <person name="Zheng W."/>
            <person name="Hao B."/>
            <person name="Liu S.-M."/>
            <person name="Wang W."/>
            <person name="Yuan L."/>
            <person name="Cao M."/>
            <person name="McDermott J."/>
            <person name="Samudrala R."/>
            <person name="Wang J."/>
            <person name="Wong G.K.-S."/>
            <person name="Yang H."/>
        </authorList>
    </citation>
    <scope>NUCLEOTIDE SEQUENCE [LARGE SCALE GENOMIC DNA]</scope>
    <source>
        <strain>cv. Nipponbare</strain>
    </source>
</reference>
<reference key="5">
    <citation type="journal article" date="2003" name="Science">
        <title>Collection, mapping, and annotation of over 28,000 cDNA clones from japonica rice.</title>
        <authorList>
            <consortium name="The rice full-length cDNA consortium"/>
        </authorList>
    </citation>
    <scope>NUCLEOTIDE SEQUENCE [LARGE SCALE MRNA]</scope>
    <source>
        <strain>cv. Nipponbare</strain>
    </source>
</reference>
<reference key="6">
    <citation type="journal article" date="2003" name="Cell Res.">
        <title>Identification of ABA-responsive genes in rice shoots via cDNA macroar-.</title>
        <authorList>
            <person name="Lin F."/>
            <person name="Xu S.L."/>
            <person name="Ni W.M."/>
            <person name="Chu Z.Q."/>
            <person name="Xu Z.H."/>
            <person name="Xue H.W."/>
        </authorList>
    </citation>
    <scope>NUCLEOTIDE SEQUENCE [MRNA] OF 473-540</scope>
</reference>
<organism>
    <name type="scientific">Oryza sativa subsp. japonica</name>
    <name type="common">Rice</name>
    <dbReference type="NCBI Taxonomy" id="39947"/>
    <lineage>
        <taxon>Eukaryota</taxon>
        <taxon>Viridiplantae</taxon>
        <taxon>Streptophyta</taxon>
        <taxon>Embryophyta</taxon>
        <taxon>Tracheophyta</taxon>
        <taxon>Spermatophyta</taxon>
        <taxon>Magnoliopsida</taxon>
        <taxon>Liliopsida</taxon>
        <taxon>Poales</taxon>
        <taxon>Poaceae</taxon>
        <taxon>BOP clade</taxon>
        <taxon>Oryzoideae</taxon>
        <taxon>Oryzeae</taxon>
        <taxon>Oryzinae</taxon>
        <taxon>Oryza</taxon>
        <taxon>Oryza sativa</taxon>
    </lineage>
</organism>
<sequence>MEKAKLSSALFAGTHFDRKRFAGDFARFRQGPPAPDVASAAAPSPEKKRKRQSKAKAKKSKKRRAEGADSASDAVEGFSVFKGLAAKKDEDDSEKKVETGKSEDSEVVRRRKEVEREIERAAILRKKFDIHISGQNVPAPLENFEELVSRYGCDSYLVGNLSKLGFQEPTPIQRQAIPILLSGRECFACAPTGSGKTLAFLFPILMKIKPGSKEGVKAVILCPTRELAAQTTRECKKLAKGRKFYIKLMTKDLSKSGNFKDMHCDILISTPLRLDHAVQKRDLDLSRVEYLVLDESDKLFELGFVEVIDSVVKACSNPSIIRSLFSATLPDSIETLARTIMHDAVRVIVGRKNSASSLIKQKLIFAGTEKGKLLALRQSFAESLNPPVLIFVQSKERAKELYKELAFDDVRADVIHADLDEEQRQDAVDNLRAGKTWVLIATEVIARGMDFKGVNCVINYDFPESASAYIHRIGRSGRAGRSGEAITFFTEEDKPFLRNIANVLISSGCEVPSWIKALPKLKRKKHRVNRDPISTLPDED</sequence>
<evidence type="ECO:0000255" key="1"/>
<evidence type="ECO:0000255" key="2">
    <source>
        <dbReference type="PROSITE-ProRule" id="PRU00541"/>
    </source>
</evidence>
<evidence type="ECO:0000255" key="3">
    <source>
        <dbReference type="PROSITE-ProRule" id="PRU00542"/>
    </source>
</evidence>
<evidence type="ECO:0000256" key="4">
    <source>
        <dbReference type="SAM" id="MobiDB-lite"/>
    </source>
</evidence>
<evidence type="ECO:0000305" key="5"/>
<name>RH57_ORYSJ</name>
<keyword id="KW-0067">ATP-binding</keyword>
<keyword id="KW-0175">Coiled coil</keyword>
<keyword id="KW-0347">Helicase</keyword>
<keyword id="KW-0378">Hydrolase</keyword>
<keyword id="KW-0547">Nucleotide-binding</keyword>
<keyword id="KW-1185">Reference proteome</keyword>
<keyword id="KW-0694">RNA-binding</keyword>
<proteinExistence type="evidence at transcript level"/>
<accession>Q5K5B6</accession>
<accession>A0A0P0X9L4</accession>
<accession>Q8LIE5</accession>
<gene>
    <name type="ordered locus">Os07g0647900</name>
    <name type="ordered locus">LOC_Os07g45360</name>
    <name type="ORF">OJ1316_A04.119</name>
    <name type="ORF">OsJ_25369</name>
    <name type="ORF">P0427D10.102</name>
</gene>
<feature type="chain" id="PRO_0000282506" description="DEAD-box ATP-dependent RNA helicase 57">
    <location>
        <begin position="1"/>
        <end position="540"/>
    </location>
</feature>
<feature type="domain" description="Helicase ATP-binding" evidence="2">
    <location>
        <begin position="177"/>
        <end position="347"/>
    </location>
</feature>
<feature type="domain" description="Helicase C-terminal" evidence="3">
    <location>
        <begin position="375"/>
        <end position="519"/>
    </location>
</feature>
<feature type="region of interest" description="Disordered" evidence="4">
    <location>
        <begin position="24"/>
        <end position="73"/>
    </location>
</feature>
<feature type="coiled-coil region" evidence="1">
    <location>
        <begin position="101"/>
        <end position="129"/>
    </location>
</feature>
<feature type="short sequence motif" description="Q motif">
    <location>
        <begin position="146"/>
        <end position="174"/>
    </location>
</feature>
<feature type="short sequence motif" description="DEAD box">
    <location>
        <begin position="294"/>
        <end position="297"/>
    </location>
</feature>
<feature type="compositionally biased region" description="Basic residues" evidence="4">
    <location>
        <begin position="47"/>
        <end position="64"/>
    </location>
</feature>
<feature type="binding site" evidence="2">
    <location>
        <begin position="190"/>
        <end position="197"/>
    </location>
    <ligand>
        <name>ATP</name>
        <dbReference type="ChEBI" id="CHEBI:30616"/>
    </ligand>
</feature>
<dbReference type="EC" id="3.6.4.13"/>
<dbReference type="EMBL" id="AP003822">
    <property type="protein sequence ID" value="BAC07000.1"/>
    <property type="molecule type" value="Genomic_DNA"/>
</dbReference>
<dbReference type="EMBL" id="AP004272">
    <property type="protein sequence ID" value="BAC20037.1"/>
    <property type="molecule type" value="Genomic_DNA"/>
</dbReference>
<dbReference type="EMBL" id="AP008213">
    <property type="protein sequence ID" value="BAF22387.1"/>
    <property type="molecule type" value="Genomic_DNA"/>
</dbReference>
<dbReference type="EMBL" id="AP014963">
    <property type="protein sequence ID" value="BAT02928.1"/>
    <property type="molecule type" value="Genomic_DNA"/>
</dbReference>
<dbReference type="EMBL" id="CM000144">
    <property type="protein sequence ID" value="EAZ40891.1"/>
    <property type="molecule type" value="Genomic_DNA"/>
</dbReference>
<dbReference type="EMBL" id="AK063527">
    <property type="status" value="NOT_ANNOTATED_CDS"/>
    <property type="molecule type" value="mRNA"/>
</dbReference>
<dbReference type="EMBL" id="AJ437266">
    <property type="protein sequence ID" value="CAD24777.1"/>
    <property type="molecule type" value="mRNA"/>
</dbReference>
<dbReference type="RefSeq" id="XP_015647755.1">
    <property type="nucleotide sequence ID" value="XM_015792269.1"/>
</dbReference>
<dbReference type="SMR" id="Q5K5B6"/>
<dbReference type="FunCoup" id="Q5K5B6">
    <property type="interactions" value="2455"/>
</dbReference>
<dbReference type="STRING" id="39947.Q5K5B6"/>
<dbReference type="iPTMnet" id="Q5K5B6"/>
<dbReference type="PaxDb" id="39947-Q5K5B6"/>
<dbReference type="EnsemblPlants" id="Os07t0647900-01">
    <property type="protein sequence ID" value="Os07t0647900-01"/>
    <property type="gene ID" value="Os07g0647900"/>
</dbReference>
<dbReference type="Gramene" id="Os07t0647900-01">
    <property type="protein sequence ID" value="Os07t0647900-01"/>
    <property type="gene ID" value="Os07g0647900"/>
</dbReference>
<dbReference type="KEGG" id="dosa:Os07g0647900"/>
<dbReference type="eggNOG" id="KOG0344">
    <property type="taxonomic scope" value="Eukaryota"/>
</dbReference>
<dbReference type="HOGENOM" id="CLU_003041_1_4_1"/>
<dbReference type="InParanoid" id="Q5K5B6"/>
<dbReference type="OMA" id="EMAHSIM"/>
<dbReference type="OrthoDB" id="360161at2759"/>
<dbReference type="Proteomes" id="UP000000763">
    <property type="component" value="Chromosome 7"/>
</dbReference>
<dbReference type="Proteomes" id="UP000007752">
    <property type="component" value="Chromosome 7"/>
</dbReference>
<dbReference type="Proteomes" id="UP000059680">
    <property type="component" value="Chromosome 7"/>
</dbReference>
<dbReference type="GO" id="GO:0005524">
    <property type="term" value="F:ATP binding"/>
    <property type="evidence" value="ECO:0007669"/>
    <property type="project" value="UniProtKB-KW"/>
</dbReference>
<dbReference type="GO" id="GO:0016887">
    <property type="term" value="F:ATP hydrolysis activity"/>
    <property type="evidence" value="ECO:0007669"/>
    <property type="project" value="RHEA"/>
</dbReference>
<dbReference type="GO" id="GO:0003723">
    <property type="term" value="F:RNA binding"/>
    <property type="evidence" value="ECO:0007669"/>
    <property type="project" value="UniProtKB-KW"/>
</dbReference>
<dbReference type="GO" id="GO:0003724">
    <property type="term" value="F:RNA helicase activity"/>
    <property type="evidence" value="ECO:0007669"/>
    <property type="project" value="UniProtKB-EC"/>
</dbReference>
<dbReference type="GO" id="GO:0030490">
    <property type="term" value="P:maturation of SSU-rRNA"/>
    <property type="evidence" value="ECO:0000318"/>
    <property type="project" value="GO_Central"/>
</dbReference>
<dbReference type="CDD" id="cd17957">
    <property type="entry name" value="DEADc_DDX52"/>
    <property type="match status" value="1"/>
</dbReference>
<dbReference type="CDD" id="cd18787">
    <property type="entry name" value="SF2_C_DEAD"/>
    <property type="match status" value="1"/>
</dbReference>
<dbReference type="Gene3D" id="3.40.50.300">
    <property type="entry name" value="P-loop containing nucleotide triphosphate hydrolases"/>
    <property type="match status" value="2"/>
</dbReference>
<dbReference type="InterPro" id="IPR044764">
    <property type="entry name" value="DDX52/Rok1_DEADc"/>
</dbReference>
<dbReference type="InterPro" id="IPR011545">
    <property type="entry name" value="DEAD/DEAH_box_helicase_dom"/>
</dbReference>
<dbReference type="InterPro" id="IPR050079">
    <property type="entry name" value="DEAD_box_RNA_helicase"/>
</dbReference>
<dbReference type="InterPro" id="IPR014001">
    <property type="entry name" value="Helicase_ATP-bd"/>
</dbReference>
<dbReference type="InterPro" id="IPR001650">
    <property type="entry name" value="Helicase_C-like"/>
</dbReference>
<dbReference type="InterPro" id="IPR027417">
    <property type="entry name" value="P-loop_NTPase"/>
</dbReference>
<dbReference type="InterPro" id="IPR014014">
    <property type="entry name" value="RNA_helicase_DEAD_Q_motif"/>
</dbReference>
<dbReference type="PANTHER" id="PTHR47959">
    <property type="entry name" value="ATP-DEPENDENT RNA HELICASE RHLE-RELATED"/>
    <property type="match status" value="1"/>
</dbReference>
<dbReference type="PANTHER" id="PTHR47959:SF15">
    <property type="entry name" value="RNA HELICASE"/>
    <property type="match status" value="1"/>
</dbReference>
<dbReference type="Pfam" id="PF00270">
    <property type="entry name" value="DEAD"/>
    <property type="match status" value="1"/>
</dbReference>
<dbReference type="Pfam" id="PF00271">
    <property type="entry name" value="Helicase_C"/>
    <property type="match status" value="1"/>
</dbReference>
<dbReference type="SMART" id="SM00487">
    <property type="entry name" value="DEXDc"/>
    <property type="match status" value="1"/>
</dbReference>
<dbReference type="SMART" id="SM00490">
    <property type="entry name" value="HELICc"/>
    <property type="match status" value="1"/>
</dbReference>
<dbReference type="SUPFAM" id="SSF52540">
    <property type="entry name" value="P-loop containing nucleoside triphosphate hydrolases"/>
    <property type="match status" value="1"/>
</dbReference>
<dbReference type="PROSITE" id="PS51192">
    <property type="entry name" value="HELICASE_ATP_BIND_1"/>
    <property type="match status" value="1"/>
</dbReference>
<dbReference type="PROSITE" id="PS51194">
    <property type="entry name" value="HELICASE_CTER"/>
    <property type="match status" value="1"/>
</dbReference>
<dbReference type="PROSITE" id="PS51195">
    <property type="entry name" value="Q_MOTIF"/>
    <property type="match status" value="1"/>
</dbReference>
<comment type="catalytic activity">
    <reaction>
        <text>ATP + H2O = ADP + phosphate + H(+)</text>
        <dbReference type="Rhea" id="RHEA:13065"/>
        <dbReference type="ChEBI" id="CHEBI:15377"/>
        <dbReference type="ChEBI" id="CHEBI:15378"/>
        <dbReference type="ChEBI" id="CHEBI:30616"/>
        <dbReference type="ChEBI" id="CHEBI:43474"/>
        <dbReference type="ChEBI" id="CHEBI:456216"/>
        <dbReference type="EC" id="3.6.4.13"/>
    </reaction>
</comment>
<comment type="domain">
    <text>The Q motif is unique to and characteristic of the DEAD box family of RNA helicases and controls ATP binding and hydrolysis.</text>
</comment>
<comment type="similarity">
    <text evidence="5">Belongs to the DEAD box helicase family. DDX52/ROK1 subfamily.</text>
</comment>
<comment type="sequence caution" evidence="5">
    <conflict type="erroneous termination">
        <sequence resource="EMBL" id="AK063527"/>
    </conflict>
    <text>Truncated C-terminus.</text>
</comment>
<protein>
    <recommendedName>
        <fullName>DEAD-box ATP-dependent RNA helicase 57</fullName>
        <ecNumber>3.6.4.13</ecNumber>
    </recommendedName>
</protein>